<protein>
    <recommendedName>
        <fullName evidence="2">Endoplasmic reticulum chaperone BiP</fullName>
        <ecNumber evidence="2">3.6.4.10</ecNumber>
    </recommendedName>
    <alternativeName>
        <fullName evidence="2">78 kDa glucose-regulated protein</fullName>
        <shortName evidence="2">GRP-78</shortName>
    </alternativeName>
    <alternativeName>
        <fullName evidence="2">Binding-immunoglobulin protein</fullName>
        <shortName evidence="2">BiP</shortName>
    </alternativeName>
    <alternativeName>
        <fullName evidence="2">Heat shock protein 70 family protein 5</fullName>
        <shortName evidence="2">HSP70 family protein 5</shortName>
    </alternativeName>
    <alternativeName>
        <fullName evidence="2">Heat shock protein family A member 5</fullName>
    </alternativeName>
    <alternativeName>
        <fullName evidence="2">Immunoglobulin heavy chain-binding protein</fullName>
    </alternativeName>
</protein>
<organism>
    <name type="scientific">Xenopus laevis</name>
    <name type="common">African clawed frog</name>
    <dbReference type="NCBI Taxonomy" id="8355"/>
    <lineage>
        <taxon>Eukaryota</taxon>
        <taxon>Metazoa</taxon>
        <taxon>Chordata</taxon>
        <taxon>Craniata</taxon>
        <taxon>Vertebrata</taxon>
        <taxon>Euteleostomi</taxon>
        <taxon>Amphibia</taxon>
        <taxon>Batrachia</taxon>
        <taxon>Anura</taxon>
        <taxon>Pipoidea</taxon>
        <taxon>Pipidae</taxon>
        <taxon>Xenopodinae</taxon>
        <taxon>Xenopus</taxon>
        <taxon>Xenopus</taxon>
    </lineage>
</organism>
<keyword id="KW-0067">ATP-binding</keyword>
<keyword id="KW-0143">Chaperone</keyword>
<keyword id="KW-0256">Endoplasmic reticulum</keyword>
<keyword id="KW-0378">Hydrolase</keyword>
<keyword id="KW-0547">Nucleotide-binding</keyword>
<keyword id="KW-1185">Reference proteome</keyword>
<keyword id="KW-0732">Signal</keyword>
<reference key="1">
    <citation type="journal article" date="1996" name="J. Biol. Chem.">
        <title>Degradation and endoplasmic reticulum retention of unassembled alpha- and beta-subunits of Na,K-ATPase correlate with interaction of BiP.</title>
        <authorList>
            <person name="Beggah A."/>
            <person name="Mathews P."/>
            <person name="Beguin P."/>
            <person name="Geering K."/>
        </authorList>
    </citation>
    <scope>NUCLEOTIDE SEQUENCE [MRNA]</scope>
</reference>
<dbReference type="EC" id="3.6.4.10" evidence="2"/>
<dbReference type="EMBL" id="U62807">
    <property type="protein sequence ID" value="AAB08760.1"/>
    <property type="molecule type" value="mRNA"/>
</dbReference>
<dbReference type="RefSeq" id="NP_001081462.1">
    <property type="nucleotide sequence ID" value="NM_001087993.1"/>
</dbReference>
<dbReference type="SMR" id="Q91883"/>
<dbReference type="BioGRID" id="99189">
    <property type="interactions" value="1"/>
</dbReference>
<dbReference type="DNASU" id="397850"/>
<dbReference type="GeneID" id="397850"/>
<dbReference type="KEGG" id="xla:397850"/>
<dbReference type="AGR" id="Xenbase:XB-GENE-17331987"/>
<dbReference type="CTD" id="397850"/>
<dbReference type="Xenbase" id="XB-GENE-17331987">
    <property type="gene designation" value="hspa5.L"/>
</dbReference>
<dbReference type="OrthoDB" id="2401965at2759"/>
<dbReference type="Proteomes" id="UP000186698">
    <property type="component" value="Chromosome 8L"/>
</dbReference>
<dbReference type="Bgee" id="397850">
    <property type="expression patterns" value="Expressed in zone of skin and 19 other cell types or tissues"/>
</dbReference>
<dbReference type="GO" id="GO:0005737">
    <property type="term" value="C:cytoplasm"/>
    <property type="evidence" value="ECO:0000318"/>
    <property type="project" value="GO_Central"/>
</dbReference>
<dbReference type="GO" id="GO:0034663">
    <property type="term" value="C:endoplasmic reticulum chaperone complex"/>
    <property type="evidence" value="ECO:0000318"/>
    <property type="project" value="GO_Central"/>
</dbReference>
<dbReference type="GO" id="GO:0005788">
    <property type="term" value="C:endoplasmic reticulum lumen"/>
    <property type="evidence" value="ECO:0000318"/>
    <property type="project" value="GO_Central"/>
</dbReference>
<dbReference type="GO" id="GO:0016020">
    <property type="term" value="C:membrane"/>
    <property type="evidence" value="ECO:0000318"/>
    <property type="project" value="GO_Central"/>
</dbReference>
<dbReference type="GO" id="GO:0005634">
    <property type="term" value="C:nucleus"/>
    <property type="evidence" value="ECO:0000318"/>
    <property type="project" value="GO_Central"/>
</dbReference>
<dbReference type="GO" id="GO:0005524">
    <property type="term" value="F:ATP binding"/>
    <property type="evidence" value="ECO:0007669"/>
    <property type="project" value="UniProtKB-KW"/>
</dbReference>
<dbReference type="GO" id="GO:0016887">
    <property type="term" value="F:ATP hydrolysis activity"/>
    <property type="evidence" value="ECO:0000250"/>
    <property type="project" value="UniProtKB"/>
</dbReference>
<dbReference type="GO" id="GO:0140662">
    <property type="term" value="F:ATP-dependent protein folding chaperone"/>
    <property type="evidence" value="ECO:0007669"/>
    <property type="project" value="InterPro"/>
</dbReference>
<dbReference type="GO" id="GO:0031072">
    <property type="term" value="F:heat shock protein binding"/>
    <property type="evidence" value="ECO:0000318"/>
    <property type="project" value="GO_Central"/>
</dbReference>
<dbReference type="GO" id="GO:0044183">
    <property type="term" value="F:protein folding chaperone"/>
    <property type="evidence" value="ECO:0000318"/>
    <property type="project" value="GO_Central"/>
</dbReference>
<dbReference type="GO" id="GO:0051085">
    <property type="term" value="P:chaperone cofactor-dependent protein refolding"/>
    <property type="evidence" value="ECO:0000318"/>
    <property type="project" value="GO_Central"/>
</dbReference>
<dbReference type="GO" id="GO:0030968">
    <property type="term" value="P:endoplasmic reticulum unfolded protein response"/>
    <property type="evidence" value="ECO:0000318"/>
    <property type="project" value="GO_Central"/>
</dbReference>
<dbReference type="GO" id="GO:0036503">
    <property type="term" value="P:ERAD pathway"/>
    <property type="evidence" value="ECO:0000318"/>
    <property type="project" value="GO_Central"/>
</dbReference>
<dbReference type="GO" id="GO:0030901">
    <property type="term" value="P:midbrain development"/>
    <property type="evidence" value="ECO:0000314"/>
    <property type="project" value="Xenbase"/>
</dbReference>
<dbReference type="GO" id="GO:1903895">
    <property type="term" value="P:negative regulation of IRE1-mediated unfolded protein response"/>
    <property type="evidence" value="ECO:0000250"/>
    <property type="project" value="UniProtKB"/>
</dbReference>
<dbReference type="GO" id="GO:0031333">
    <property type="term" value="P:negative regulation of protein-containing complex assembly"/>
    <property type="evidence" value="ECO:0000250"/>
    <property type="project" value="UniProtKB"/>
</dbReference>
<dbReference type="GO" id="GO:0061351">
    <property type="term" value="P:neural precursor cell proliferation"/>
    <property type="evidence" value="ECO:0000315"/>
    <property type="project" value="Xenbase"/>
</dbReference>
<dbReference type="GO" id="GO:0030182">
    <property type="term" value="P:neuron differentiation"/>
    <property type="evidence" value="ECO:0000315"/>
    <property type="project" value="Xenbase"/>
</dbReference>
<dbReference type="GO" id="GO:0042026">
    <property type="term" value="P:protein refolding"/>
    <property type="evidence" value="ECO:0000318"/>
    <property type="project" value="GO_Central"/>
</dbReference>
<dbReference type="CDD" id="cd10241">
    <property type="entry name" value="ASKHA_NBD_HSP70_BiP"/>
    <property type="match status" value="1"/>
</dbReference>
<dbReference type="FunFam" id="3.30.420.40:FF:000720">
    <property type="entry name" value="Endoplasmic reticulum chaperone BiP"/>
    <property type="match status" value="1"/>
</dbReference>
<dbReference type="FunFam" id="3.90.640.10:FF:000153">
    <property type="entry name" value="Endoplasmic reticulum chaperone BiP"/>
    <property type="match status" value="1"/>
</dbReference>
<dbReference type="FunFam" id="2.60.34.10:FF:000002">
    <property type="entry name" value="Heat shock 70 kDa"/>
    <property type="match status" value="1"/>
</dbReference>
<dbReference type="FunFam" id="3.30.30.30:FF:000001">
    <property type="entry name" value="heat shock 70 kDa protein-like"/>
    <property type="match status" value="1"/>
</dbReference>
<dbReference type="FunFam" id="1.20.1270.10:FF:000061">
    <property type="entry name" value="Heat shock protein family A (Hsp70) member 5"/>
    <property type="match status" value="1"/>
</dbReference>
<dbReference type="Gene3D" id="1.20.1270.10">
    <property type="match status" value="1"/>
</dbReference>
<dbReference type="Gene3D" id="3.30.420.40">
    <property type="match status" value="2"/>
</dbReference>
<dbReference type="Gene3D" id="3.90.640.10">
    <property type="entry name" value="Actin, Chain A, domain 4"/>
    <property type="match status" value="1"/>
</dbReference>
<dbReference type="Gene3D" id="2.60.34.10">
    <property type="entry name" value="Substrate Binding Domain Of DNAk, Chain A, domain 1"/>
    <property type="match status" value="1"/>
</dbReference>
<dbReference type="InterPro" id="IPR043129">
    <property type="entry name" value="ATPase_NBD"/>
</dbReference>
<dbReference type="InterPro" id="IPR042050">
    <property type="entry name" value="BIP_NBD"/>
</dbReference>
<dbReference type="InterPro" id="IPR018181">
    <property type="entry name" value="Heat_shock_70_CS"/>
</dbReference>
<dbReference type="InterPro" id="IPR029048">
    <property type="entry name" value="HSP70_C_sf"/>
</dbReference>
<dbReference type="InterPro" id="IPR029047">
    <property type="entry name" value="HSP70_peptide-bd_sf"/>
</dbReference>
<dbReference type="InterPro" id="IPR013126">
    <property type="entry name" value="Hsp_70_fam"/>
</dbReference>
<dbReference type="NCBIfam" id="NF001413">
    <property type="entry name" value="PRK00290.1"/>
    <property type="match status" value="1"/>
</dbReference>
<dbReference type="PANTHER" id="PTHR19375">
    <property type="entry name" value="HEAT SHOCK PROTEIN 70KDA"/>
    <property type="match status" value="1"/>
</dbReference>
<dbReference type="Pfam" id="PF00012">
    <property type="entry name" value="HSP70"/>
    <property type="match status" value="1"/>
</dbReference>
<dbReference type="PRINTS" id="PR00301">
    <property type="entry name" value="HEATSHOCK70"/>
</dbReference>
<dbReference type="SUPFAM" id="SSF53067">
    <property type="entry name" value="Actin-like ATPase domain"/>
    <property type="match status" value="2"/>
</dbReference>
<dbReference type="SUPFAM" id="SSF100934">
    <property type="entry name" value="Heat shock protein 70kD (HSP70), C-terminal subdomain"/>
    <property type="match status" value="1"/>
</dbReference>
<dbReference type="SUPFAM" id="SSF100920">
    <property type="entry name" value="Heat shock protein 70kD (HSP70), peptide-binding domain"/>
    <property type="match status" value="1"/>
</dbReference>
<dbReference type="PROSITE" id="PS00014">
    <property type="entry name" value="ER_TARGET"/>
    <property type="match status" value="1"/>
</dbReference>
<dbReference type="PROSITE" id="PS00297">
    <property type="entry name" value="HSP70_1"/>
    <property type="match status" value="1"/>
</dbReference>
<dbReference type="PROSITE" id="PS00329">
    <property type="entry name" value="HSP70_2"/>
    <property type="match status" value="1"/>
</dbReference>
<dbReference type="PROSITE" id="PS01036">
    <property type="entry name" value="HSP70_3"/>
    <property type="match status" value="1"/>
</dbReference>
<accession>Q91883</accession>
<feature type="signal peptide" evidence="4">
    <location>
        <begin position="1"/>
        <end position="19"/>
    </location>
</feature>
<feature type="chain" id="PRO_0000013571" description="Endoplasmic reticulum chaperone BiP">
    <location>
        <begin position="20"/>
        <end position="658"/>
    </location>
</feature>
<feature type="region of interest" description="Nucleotide-binding (NBD)" evidence="2">
    <location>
        <begin position="127"/>
        <end position="281"/>
    </location>
</feature>
<feature type="region of interest" description="Interdomain linker" evidence="1">
    <location>
        <begin position="410"/>
        <end position="420"/>
    </location>
</feature>
<feature type="region of interest" description="Substrate-binding (SBD)" evidence="2">
    <location>
        <begin position="421"/>
        <end position="501"/>
    </location>
</feature>
<feature type="region of interest" description="Disordered" evidence="6">
    <location>
        <begin position="634"/>
        <end position="658"/>
    </location>
</feature>
<feature type="short sequence motif" description="Prevents secretion from ER" evidence="5">
    <location>
        <begin position="655"/>
        <end position="658"/>
    </location>
</feature>
<feature type="compositionally biased region" description="Acidic residues" evidence="6">
    <location>
        <begin position="648"/>
        <end position="658"/>
    </location>
</feature>
<feature type="binding site" evidence="2">
    <location>
        <begin position="38"/>
        <end position="41"/>
    </location>
    <ligand>
        <name>ATP</name>
        <dbReference type="ChEBI" id="CHEBI:30616"/>
    </ligand>
</feature>
<feature type="binding site" evidence="2">
    <location>
        <position position="98"/>
    </location>
    <ligand>
        <name>ATP</name>
        <dbReference type="ChEBI" id="CHEBI:30616"/>
    </ligand>
</feature>
<feature type="binding site" evidence="2">
    <location>
        <begin position="228"/>
        <end position="230"/>
    </location>
    <ligand>
        <name>ATP</name>
        <dbReference type="ChEBI" id="CHEBI:30616"/>
    </ligand>
</feature>
<feature type="binding site" evidence="2">
    <location>
        <begin position="294"/>
        <end position="301"/>
    </location>
    <ligand>
        <name>ATP</name>
        <dbReference type="ChEBI" id="CHEBI:30616"/>
    </ligand>
</feature>
<feature type="binding site" evidence="2">
    <location>
        <begin position="365"/>
        <end position="368"/>
    </location>
    <ligand>
        <name>ATP</name>
        <dbReference type="ChEBI" id="CHEBI:30616"/>
    </ligand>
</feature>
<comment type="function">
    <text evidence="1 2 3">Endoplasmic reticulum chaperone that plays a key role in protein folding and quality control in the endoplasmic reticulum lumen (By similarity). Involved in the correct folding of proteins and degradation of misfolded proteins via its interaction with dnajc10/ERdj5, probably to facilitate the release of dnajc10/ERdj5 from its substrate (By similarity). Acts as a key repressor of the EIF2AK3/PERK and ERN1/IRE1-mediated unfolded protein response (UPR). In the unstressed endoplasmic reticulum, recruited by DNAJB9/ERdj4 to the luminal region of ERN1/IRE1, leading to disrupt the dimerization of ERN1/IRE1, thereby inactivating ERN1/IRE1. Also binds and inactivates EIF2AK3/PERK in unstressed cells (By similarity). Accumulation of misfolded protein in the endoplasmic reticulum causes release of HSPA5/BiP from ERN1/IRE1 and EIF2AK3/PERK, allowing their homodimerization and subsequent activation (By similarity).</text>
</comment>
<comment type="catalytic activity">
    <reaction evidence="1">
        <text>ATP + H2O = ADP + phosphate + H(+)</text>
        <dbReference type="Rhea" id="RHEA:13065"/>
        <dbReference type="ChEBI" id="CHEBI:15377"/>
        <dbReference type="ChEBI" id="CHEBI:15378"/>
        <dbReference type="ChEBI" id="CHEBI:30616"/>
        <dbReference type="ChEBI" id="CHEBI:43474"/>
        <dbReference type="ChEBI" id="CHEBI:456216"/>
        <dbReference type="EC" id="3.6.4.10"/>
    </reaction>
</comment>
<comment type="activity regulation">
    <text evidence="1 2">The chaperone activity is regulated by ATP-induced allosteric coupling of the nucleotide-binding (NBD) and substrate-binding (SBD) domains (By similarity). In the ADP-bound and nucleotide-free (apo) states, the two domains have little interaction (By similarity). In contrast, in the ATP-bound state the two domains are tightly coupled, which results in drastically accelerated kinetics in both binding and release of polypeptide substrates (By similarity). J domain-containing co-chaperones (dnajb9/ERdj4 or dnajc10/ERdj5) stimulate the ATPase activity and are required for efficient substrate recognition by hspa5/BiP. Homooligomerization inactivates participating hspa5/BiP protomers and probably act as reservoirs to store hspa5/BiP molecules when they are not needed by the cell (By similarity).</text>
</comment>
<comment type="subunit">
    <text evidence="1 2 3">Monomer and homooligomer; homooligomerization via the interdomain linker inactivates the chaperone activity and acts as a storage of hspa5/BiP molecules (By similarity). Interacts with DNAJC10 (By similarity). Interacts with dnajb9/ERdj4; leading to recruit hspa5/BiP to ern1/ire1. Interacts with ern1/ire1; interaction takes place following interaction with dnajb9/ERdj4 and leads to inactivate ern1/IRE1 (By similarity).</text>
</comment>
<comment type="subcellular location">
    <subcellularLocation>
        <location evidence="2">Endoplasmic reticulum lumen</location>
    </subcellularLocation>
</comment>
<comment type="domain">
    <text evidence="1">The interdomain linker regulates the chaperone activity by mediating the formation of homooligomers. Homooligomers are formed by engagement of the interdomain linker of one hspa5/BiP molecule as a typical substrate of an adjacent hspa5/BiP molecule. hspa5/BiP oligomerization inactivates participating hspa5/BiP protomers. hspa5/BiP oligomers probably act as reservoirs to store hspa5/BiP molecules when they are not needed by the cell. When the levels of unfolded proteins rise, cells can rapidly break up these oligomers to make active monomers.</text>
</comment>
<comment type="similarity">
    <text evidence="7">Belongs to the heat shock protein 70 family.</text>
</comment>
<proteinExistence type="evidence at transcript level"/>
<evidence type="ECO:0000250" key="1">
    <source>
        <dbReference type="UniProtKB" id="G3I8R9"/>
    </source>
</evidence>
<evidence type="ECO:0000250" key="2">
    <source>
        <dbReference type="UniProtKB" id="P11021"/>
    </source>
</evidence>
<evidence type="ECO:0000250" key="3">
    <source>
        <dbReference type="UniProtKB" id="P20029"/>
    </source>
</evidence>
<evidence type="ECO:0000255" key="4"/>
<evidence type="ECO:0000255" key="5">
    <source>
        <dbReference type="PROSITE-ProRule" id="PRU10138"/>
    </source>
</evidence>
<evidence type="ECO:0000256" key="6">
    <source>
        <dbReference type="SAM" id="MobiDB-lite"/>
    </source>
</evidence>
<evidence type="ECO:0000305" key="7"/>
<gene>
    <name evidence="2" type="primary">hspa5</name>
    <name evidence="2" type="synonym">grp78</name>
</gene>
<sequence length="658" mass="72635">MVTMKLFALVLLVSASVFASDDDDKKDDIGTVVGIDLGTTYSCVGVFKNGRVEIIANDQGNRITPSYVAFTPEGERLIGDAAKNQLTSNPENTVFDAKRLIGRTWNDPSVQQDIKYLPFKVIEKKTKPYIEVDIGDQMKTFAPEEISAMVLVKMKETAEAYLGRKVTHAVVTVPAYFNDAQRQATKDAGTIAGLNVMRIINEPTAAAIAYGLDKKEGEKNILVFDLGGGTFDVSLLTIDNGVFEVVATNGDTHLGGEDFDQRVMEHFIKLYKKKTGKDVRADKRAVQKLRREVEKAKRALSAQHQSRIEIESFFEGEDFSETLTRAKFEELNMDLFRSTMKPVQKVLDDSDLKKSDIDEIVLVGGSTRIPKIQQLVKELFNGKEPSRGINPDEAVAYGAAVQAGVLSGDQDTGDLVLLDVCPLTLGIETVGGVMTKLIPRNTVVPTKKSQIFSTASDNQPTVTIKVYEGERPLTKDNHLLGTFDLTGIPPAPRGVPQIEVTFEIDVNGILRVTAEDKGTGNKNKITITNDQNRLTPEEIERMVTDAEKFAEEDKKLKERIDTRNELESYAYSLKNQIGDKEKLGGKLSSEDKETIEKAVEEKIEWLESHQDADIEDFKAKKKELEEIVQPIVGKLYGGAGAPPPEGAEGAEETEKDEL</sequence>
<name>BIP_XENLA</name>